<sequence>MGHQNIWYSHPRKYGQGSRSCRACSNRHGLIRKYGLNICRQCFREYANDIGFKKLD</sequence>
<name>RS29_SCALT</name>
<proteinExistence type="inferred from homology"/>
<keyword id="KW-0963">Cytoplasm</keyword>
<keyword id="KW-0256">Endoplasmic reticulum</keyword>
<keyword id="KW-0479">Metal-binding</keyword>
<keyword id="KW-0687">Ribonucleoprotein</keyword>
<keyword id="KW-0689">Ribosomal protein</keyword>
<keyword id="KW-0862">Zinc</keyword>
<gene>
    <name type="primary">RpS29</name>
</gene>
<protein>
    <recommendedName>
        <fullName evidence="5">Small ribosomal subunit protein uS14</fullName>
    </recommendedName>
    <alternativeName>
        <fullName>40S ribosomal protein S29</fullName>
    </alternativeName>
</protein>
<accession>Q4LAY1</accession>
<evidence type="ECO:0000250" key="1">
    <source>
        <dbReference type="UniProtKB" id="P62273"/>
    </source>
</evidence>
<evidence type="ECO:0000250" key="2">
    <source>
        <dbReference type="UniProtKB" id="Q6QAP6"/>
    </source>
</evidence>
<evidence type="ECO:0000250" key="3">
    <source>
        <dbReference type="UniProtKB" id="Q9VH69"/>
    </source>
</evidence>
<evidence type="ECO:0000255" key="4"/>
<evidence type="ECO:0000305" key="5"/>
<reference key="1">
    <citation type="submission" date="2005-06" db="EMBL/GenBank/DDBJ databases">
        <title>Ribosomal proteins of Coleoptera.</title>
        <authorList>
            <person name="Longhorn S.J."/>
            <person name="Vogler A.P."/>
        </authorList>
    </citation>
    <scope>NUCLEOTIDE SEQUENCE [MRNA]</scope>
</reference>
<organism>
    <name type="scientific">Scarabaeus laticollis</name>
    <name type="common">Scarab dung beetle</name>
    <dbReference type="NCBI Taxonomy" id="292456"/>
    <lineage>
        <taxon>Eukaryota</taxon>
        <taxon>Metazoa</taxon>
        <taxon>Ecdysozoa</taxon>
        <taxon>Arthropoda</taxon>
        <taxon>Hexapoda</taxon>
        <taxon>Insecta</taxon>
        <taxon>Pterygota</taxon>
        <taxon>Neoptera</taxon>
        <taxon>Endopterygota</taxon>
        <taxon>Coleoptera</taxon>
        <taxon>Polyphaga</taxon>
        <taxon>Scarabaeiformia</taxon>
        <taxon>Scarabaeidae</taxon>
        <taxon>Scarabaeinae</taxon>
        <taxon>Scarabaeini</taxon>
        <taxon>Scarabaeus</taxon>
        <taxon>Ateuchetus</taxon>
    </lineage>
</organism>
<feature type="chain" id="PRO_0000268807" description="Small ribosomal subunit protein uS14">
    <location>
        <begin position="1"/>
        <end position="56"/>
    </location>
</feature>
<feature type="binding site" evidence="4">
    <location>
        <position position="21"/>
    </location>
    <ligand>
        <name>Zn(2+)</name>
        <dbReference type="ChEBI" id="CHEBI:29105"/>
    </ligand>
</feature>
<feature type="binding site" evidence="4">
    <location>
        <position position="24"/>
    </location>
    <ligand>
        <name>Zn(2+)</name>
        <dbReference type="ChEBI" id="CHEBI:29105"/>
    </ligand>
</feature>
<feature type="binding site" evidence="4">
    <location>
        <position position="39"/>
    </location>
    <ligand>
        <name>Zn(2+)</name>
        <dbReference type="ChEBI" id="CHEBI:29105"/>
    </ligand>
</feature>
<feature type="binding site" evidence="4">
    <location>
        <position position="42"/>
    </location>
    <ligand>
        <name>Zn(2+)</name>
        <dbReference type="ChEBI" id="CHEBI:29105"/>
    </ligand>
</feature>
<dbReference type="EMBL" id="AM040021">
    <property type="protein sequence ID" value="CAJ01886.1"/>
    <property type="molecule type" value="mRNA"/>
</dbReference>
<dbReference type="SMR" id="Q4LAY1"/>
<dbReference type="GO" id="GO:0022627">
    <property type="term" value="C:cytosolic small ribosomal subunit"/>
    <property type="evidence" value="ECO:0000250"/>
    <property type="project" value="UniProtKB"/>
</dbReference>
<dbReference type="GO" id="GO:0005840">
    <property type="term" value="C:ribosome"/>
    <property type="evidence" value="ECO:0000250"/>
    <property type="project" value="UniProtKB"/>
</dbReference>
<dbReference type="GO" id="GO:0005791">
    <property type="term" value="C:rough endoplasmic reticulum"/>
    <property type="evidence" value="ECO:0007669"/>
    <property type="project" value="UniProtKB-SubCell"/>
</dbReference>
<dbReference type="GO" id="GO:0003735">
    <property type="term" value="F:structural constituent of ribosome"/>
    <property type="evidence" value="ECO:0007669"/>
    <property type="project" value="InterPro"/>
</dbReference>
<dbReference type="GO" id="GO:0008270">
    <property type="term" value="F:zinc ion binding"/>
    <property type="evidence" value="ECO:0000250"/>
    <property type="project" value="UniProtKB"/>
</dbReference>
<dbReference type="GO" id="GO:0002181">
    <property type="term" value="P:cytoplasmic translation"/>
    <property type="evidence" value="ECO:0000250"/>
    <property type="project" value="UniProtKB"/>
</dbReference>
<dbReference type="FunFam" id="4.10.830.10:FF:000002">
    <property type="entry name" value="40S ribosomal protein S29"/>
    <property type="match status" value="1"/>
</dbReference>
<dbReference type="Gene3D" id="4.10.830.10">
    <property type="entry name" value="30s Ribosomal Protein S14, Chain N"/>
    <property type="match status" value="1"/>
</dbReference>
<dbReference type="InterPro" id="IPR001209">
    <property type="entry name" value="Ribosomal_uS14"/>
</dbReference>
<dbReference type="InterPro" id="IPR018271">
    <property type="entry name" value="Ribosomal_uS14_CS"/>
</dbReference>
<dbReference type="InterPro" id="IPR039744">
    <property type="entry name" value="RIbosomal_uS14_euk_arc"/>
</dbReference>
<dbReference type="InterPro" id="IPR043140">
    <property type="entry name" value="Ribosomal_uS14_sf"/>
</dbReference>
<dbReference type="NCBIfam" id="NF004424">
    <property type="entry name" value="PRK05766.1"/>
    <property type="match status" value="1"/>
</dbReference>
<dbReference type="PANTHER" id="PTHR12010">
    <property type="entry name" value="40S RIBOSOMAL PROTEIN S29"/>
    <property type="match status" value="1"/>
</dbReference>
<dbReference type="PANTHER" id="PTHR12010:SF2">
    <property type="entry name" value="40S RIBOSOMAL PROTEIN S29"/>
    <property type="match status" value="1"/>
</dbReference>
<dbReference type="Pfam" id="PF00253">
    <property type="entry name" value="Ribosomal_S14"/>
    <property type="match status" value="1"/>
</dbReference>
<dbReference type="PROSITE" id="PS00527">
    <property type="entry name" value="RIBOSOMAL_S14"/>
    <property type="match status" value="1"/>
</dbReference>
<comment type="cofactor">
    <cofactor evidence="1">
        <name>Zn(2+)</name>
        <dbReference type="ChEBI" id="CHEBI:29105"/>
    </cofactor>
    <text evidence="1">Binds 1 zinc ion per subunit.</text>
</comment>
<comment type="subunit">
    <text evidence="3">Component of the 40S small ribosomal subunit.</text>
</comment>
<comment type="subcellular location">
    <subcellularLocation>
        <location evidence="1">Cytoplasm</location>
        <location evidence="1">Cytosol</location>
    </subcellularLocation>
    <subcellularLocation>
        <location evidence="1">Cytoplasm</location>
    </subcellularLocation>
    <subcellularLocation>
        <location evidence="2">Rough endoplasmic reticulum</location>
    </subcellularLocation>
    <text evidence="1 2">Detected on cytosolic polysomes (By similarity). Detected in ribosomes that are associated with the rough endoplasmic reticulum (By similarity).</text>
</comment>
<comment type="similarity">
    <text evidence="5">Belongs to the universal ribosomal protein uS14 family.</text>
</comment>